<feature type="chain" id="PRO_0000151660" description="Arginine--tRNA ligase, cytoplasmic">
    <location>
        <begin position="1"/>
        <end position="660"/>
    </location>
</feature>
<feature type="region of interest" description="Could be involved in the assembly of the multisynthetase complex" evidence="1">
    <location>
        <begin position="1"/>
        <end position="72"/>
    </location>
</feature>
<feature type="region of interest" description="Interaction with tRNA" evidence="3">
    <location>
        <begin position="529"/>
        <end position="543"/>
    </location>
</feature>
<feature type="short sequence motif" description="'HIGH' region" evidence="1">
    <location>
        <begin position="201"/>
        <end position="212"/>
    </location>
</feature>
<feature type="binding site" evidence="2">
    <location>
        <begin position="200"/>
        <end position="202"/>
    </location>
    <ligand>
        <name>L-arginine</name>
        <dbReference type="ChEBI" id="CHEBI:32682"/>
    </ligand>
</feature>
<feature type="binding site" evidence="2">
    <location>
        <position position="211"/>
    </location>
    <ligand>
        <name>L-arginine</name>
        <dbReference type="ChEBI" id="CHEBI:32682"/>
    </ligand>
</feature>
<feature type="binding site" evidence="2">
    <location>
        <position position="384"/>
    </location>
    <ligand>
        <name>L-arginine</name>
        <dbReference type="ChEBI" id="CHEBI:32682"/>
    </ligand>
</feature>
<feature type="binding site" evidence="2">
    <location>
        <position position="388"/>
    </location>
    <ligand>
        <name>L-arginine</name>
        <dbReference type="ChEBI" id="CHEBI:32682"/>
    </ligand>
</feature>
<feature type="binding site" evidence="2">
    <location>
        <position position="412"/>
    </location>
    <ligand>
        <name>L-arginine</name>
        <dbReference type="ChEBI" id="CHEBI:32682"/>
    </ligand>
</feature>
<feature type="modified residue" description="N-acetylmethionine" evidence="2">
    <location>
        <position position="1"/>
    </location>
</feature>
<sequence>MDGLVAQCSARLLQQEKEIKSLTAEIDRLKNCSYLEASPSLEQLREENLKLKYRLNILRRSLQAERKRPTKNMININSRLQELFGCAIKAAYPDLENPPLVVTPSQQPKFGDYQCNSAMGISQMLKAKEQKVSPREIAENITKHLPNNEYIDRVEIAGPGFINVHLRKDFVSEQLTNLLVNGVQLPVLGENEKVIVDFSSPNIAKEMHVGHLRSTIIGESMSRLFEFAGYNVLRLNHVGDWGTQFGMLIAHLQDKFPDYLTVSPPIGDLQAFYKESKKRFDTEEEFKKRAYECVVLLQSKNPDIMKAWNLICDVSREEFNKIYDALDITLIERGESFYQDRMKDIVKEFEDKGFVQVDDGRKIVFVPGCSVPLTIVKSDGGYTYDTSDLAAIKQRLFEEKANKIIYVVDNGQATHFQTVFAAAQMIGWYDPKVTRVAHVGFGVVLGEDKKKFKTRSGETVRLMDLLEEGLRRSMDKLKEKERDKVLTEEELKAAQTSVAYGCIKYADLSHNRLNDYVFSFDKMLDDRGNTAAYLLYAFTRIRSIARLANIDEEMLQRAARETKIILDHEKEWKLGRCILRFPEILQKILDDLFLHTLCDYIYELATTFTEFYDSCYCVEKDRQTGKVLKVNMWRMLLCEAVAAVMAKGFDILGIKPVQRM</sequence>
<reference key="1">
    <citation type="journal article" date="2004" name="Genome Res.">
        <title>The status, quality, and expansion of the NIH full-length cDNA project: the Mammalian Gene Collection (MGC).</title>
        <authorList>
            <consortium name="The MGC Project Team"/>
        </authorList>
    </citation>
    <scope>NUCLEOTIDE SEQUENCE [LARGE SCALE MRNA]</scope>
    <source>
        <strain>Brown Norway/NHsdMcwi</strain>
        <tissue>Liver</tissue>
    </source>
</reference>
<reference key="2">
    <citation type="journal article" date="1990" name="Proc. Natl. Acad. Sci. U.S.A.">
        <title>Existence of two forms of rat liver arginyl-tRNA synthetase suggests channeling of aminoacyl-tRNA for protein synthesis.</title>
        <authorList>
            <person name="Sivaram P."/>
            <person name="Deutscher M.P."/>
        </authorList>
    </citation>
    <scope>PROTEIN SEQUENCE OF 73-92</scope>
</reference>
<reference key="3">
    <citation type="journal article" date="2015" name="J. Mol. Histol.">
        <title>Expression profile of aminoacyl-tRNA synthetases in dorsal root ganglion neurons after peripheral nerve injury.</title>
        <authorList>
            <person name="Park B.S."/>
            <person name="Jo H.W."/>
            <person name="Jung J."/>
        </authorList>
    </citation>
    <scope>TISSUE SPECIFICITY</scope>
</reference>
<dbReference type="EC" id="6.1.1.19" evidence="2"/>
<dbReference type="EMBL" id="BC161929">
    <property type="protein sequence ID" value="AAI61929.1"/>
    <property type="molecule type" value="mRNA"/>
</dbReference>
<dbReference type="PIR" id="A35857">
    <property type="entry name" value="A35857"/>
</dbReference>
<dbReference type="RefSeq" id="NP_001099247.2">
    <property type="nucleotide sequence ID" value="NM_001105777.2"/>
</dbReference>
<dbReference type="SMR" id="P40329"/>
<dbReference type="BioGRID" id="252058">
    <property type="interactions" value="1"/>
</dbReference>
<dbReference type="FunCoup" id="P40329">
    <property type="interactions" value="3138"/>
</dbReference>
<dbReference type="STRING" id="10116.ENSRNOP00000010252"/>
<dbReference type="iPTMnet" id="P40329"/>
<dbReference type="PhosphoSitePlus" id="P40329"/>
<dbReference type="jPOST" id="P40329"/>
<dbReference type="PaxDb" id="10116-ENSRNOP00000010252"/>
<dbReference type="Ensembl" id="ENSRNOT00000010252.7">
    <property type="protein sequence ID" value="ENSRNOP00000010252.4"/>
    <property type="gene ID" value="ENSRNOG00000007739.7"/>
</dbReference>
<dbReference type="GeneID" id="287191"/>
<dbReference type="KEGG" id="rno:287191"/>
<dbReference type="UCSC" id="RGD:1309215">
    <property type="organism name" value="rat"/>
</dbReference>
<dbReference type="AGR" id="RGD:1309215"/>
<dbReference type="CTD" id="5917"/>
<dbReference type="RGD" id="1309215">
    <property type="gene designation" value="Rars1"/>
</dbReference>
<dbReference type="eggNOG" id="KOG4426">
    <property type="taxonomic scope" value="Eukaryota"/>
</dbReference>
<dbReference type="GeneTree" id="ENSGT00530000063407"/>
<dbReference type="HOGENOM" id="CLU_006406_5_1_1"/>
<dbReference type="InParanoid" id="P40329"/>
<dbReference type="OMA" id="NKPLHLG"/>
<dbReference type="OrthoDB" id="68056at2759"/>
<dbReference type="PhylomeDB" id="P40329"/>
<dbReference type="TreeFam" id="TF106111"/>
<dbReference type="BRENDA" id="6.1.1.19">
    <property type="organism ID" value="5301"/>
</dbReference>
<dbReference type="Reactome" id="R-RNO-9856649">
    <property type="pathway name" value="Transcriptional and post-translational regulation of MITF-M expression and activity"/>
</dbReference>
<dbReference type="PRO" id="PR:P40329"/>
<dbReference type="Proteomes" id="UP000002494">
    <property type="component" value="Chromosome 10"/>
</dbReference>
<dbReference type="Bgee" id="ENSRNOG00000007739">
    <property type="expression patterns" value="Expressed in jejunum and 20 other cell types or tissues"/>
</dbReference>
<dbReference type="GO" id="GO:0017101">
    <property type="term" value="C:aminoacyl-tRNA synthetase multienzyme complex"/>
    <property type="evidence" value="ECO:0000314"/>
    <property type="project" value="CAFA"/>
</dbReference>
<dbReference type="GO" id="GO:0005737">
    <property type="term" value="C:cytoplasm"/>
    <property type="evidence" value="ECO:0000266"/>
    <property type="project" value="RGD"/>
</dbReference>
<dbReference type="GO" id="GO:0005829">
    <property type="term" value="C:cytosol"/>
    <property type="evidence" value="ECO:0000250"/>
    <property type="project" value="UniProtKB"/>
</dbReference>
<dbReference type="GO" id="GO:0005730">
    <property type="term" value="C:nucleolus"/>
    <property type="evidence" value="ECO:0007669"/>
    <property type="project" value="Ensembl"/>
</dbReference>
<dbReference type="GO" id="GO:0005654">
    <property type="term" value="C:nucleoplasm"/>
    <property type="evidence" value="ECO:0007669"/>
    <property type="project" value="Ensembl"/>
</dbReference>
<dbReference type="GO" id="GO:0005634">
    <property type="term" value="C:nucleus"/>
    <property type="evidence" value="ECO:0000266"/>
    <property type="project" value="RGD"/>
</dbReference>
<dbReference type="GO" id="GO:0034618">
    <property type="term" value="F:arginine binding"/>
    <property type="evidence" value="ECO:0000314"/>
    <property type="project" value="RGD"/>
</dbReference>
<dbReference type="GO" id="GO:0004814">
    <property type="term" value="F:arginine-tRNA ligase activity"/>
    <property type="evidence" value="ECO:0000314"/>
    <property type="project" value="RGD"/>
</dbReference>
<dbReference type="GO" id="GO:0005524">
    <property type="term" value="F:ATP binding"/>
    <property type="evidence" value="ECO:0000314"/>
    <property type="project" value="RGD"/>
</dbReference>
<dbReference type="GO" id="GO:0000049">
    <property type="term" value="F:tRNA binding"/>
    <property type="evidence" value="ECO:0000314"/>
    <property type="project" value="RGD"/>
</dbReference>
<dbReference type="GO" id="GO:0006420">
    <property type="term" value="P:arginyl-tRNA aminoacylation"/>
    <property type="evidence" value="ECO:0000314"/>
    <property type="project" value="RGD"/>
</dbReference>
<dbReference type="CDD" id="cd00671">
    <property type="entry name" value="ArgRS_core"/>
    <property type="match status" value="1"/>
</dbReference>
<dbReference type="FunFam" id="1.10.730.10:FF:000016">
    <property type="entry name" value="Arginine--tRNA ligase, cytoplasmic"/>
    <property type="match status" value="1"/>
</dbReference>
<dbReference type="FunFam" id="3.30.1360.70:FF:000002">
    <property type="entry name" value="arginine--tRNA ligase, cytoplasmic"/>
    <property type="match status" value="1"/>
</dbReference>
<dbReference type="FunFam" id="3.40.50.620:FF:000084">
    <property type="entry name" value="arginine--tRNA ligase, cytoplasmic"/>
    <property type="match status" value="1"/>
</dbReference>
<dbReference type="Gene3D" id="3.30.1360.70">
    <property type="entry name" value="Arginyl tRNA synthetase N-terminal domain"/>
    <property type="match status" value="1"/>
</dbReference>
<dbReference type="Gene3D" id="3.40.50.620">
    <property type="entry name" value="HUPs"/>
    <property type="match status" value="1"/>
</dbReference>
<dbReference type="Gene3D" id="1.10.730.10">
    <property type="entry name" value="Isoleucyl-tRNA Synthetase, Domain 1"/>
    <property type="match status" value="1"/>
</dbReference>
<dbReference type="HAMAP" id="MF_00123">
    <property type="entry name" value="Arg_tRNA_synth"/>
    <property type="match status" value="1"/>
</dbReference>
<dbReference type="InterPro" id="IPR001412">
    <property type="entry name" value="aa-tRNA-synth_I_CS"/>
</dbReference>
<dbReference type="InterPro" id="IPR001278">
    <property type="entry name" value="Arg-tRNA-ligase"/>
</dbReference>
<dbReference type="InterPro" id="IPR005148">
    <property type="entry name" value="Arg-tRNA-synth_N"/>
</dbReference>
<dbReference type="InterPro" id="IPR036695">
    <property type="entry name" value="Arg-tRNA-synth_N_sf"/>
</dbReference>
<dbReference type="InterPro" id="IPR035684">
    <property type="entry name" value="ArgRS_core"/>
</dbReference>
<dbReference type="InterPro" id="IPR008909">
    <property type="entry name" value="DALR_anticod-bd"/>
</dbReference>
<dbReference type="InterPro" id="IPR014729">
    <property type="entry name" value="Rossmann-like_a/b/a_fold"/>
</dbReference>
<dbReference type="InterPro" id="IPR009080">
    <property type="entry name" value="tRNAsynth_Ia_anticodon-bd"/>
</dbReference>
<dbReference type="NCBIfam" id="TIGR00456">
    <property type="entry name" value="argS"/>
    <property type="match status" value="1"/>
</dbReference>
<dbReference type="PANTHER" id="PTHR11956:SF5">
    <property type="entry name" value="ARGININE--TRNA LIGASE, CYTOPLASMIC"/>
    <property type="match status" value="1"/>
</dbReference>
<dbReference type="PANTHER" id="PTHR11956">
    <property type="entry name" value="ARGINYL-TRNA SYNTHETASE"/>
    <property type="match status" value="1"/>
</dbReference>
<dbReference type="Pfam" id="PF03485">
    <property type="entry name" value="Arg_tRNA_synt_N"/>
    <property type="match status" value="1"/>
</dbReference>
<dbReference type="Pfam" id="PF05746">
    <property type="entry name" value="DALR_1"/>
    <property type="match status" value="1"/>
</dbReference>
<dbReference type="Pfam" id="PF00750">
    <property type="entry name" value="tRNA-synt_1d"/>
    <property type="match status" value="1"/>
</dbReference>
<dbReference type="PRINTS" id="PR01038">
    <property type="entry name" value="TRNASYNTHARG"/>
</dbReference>
<dbReference type="SMART" id="SM01016">
    <property type="entry name" value="Arg_tRNA_synt_N"/>
    <property type="match status" value="1"/>
</dbReference>
<dbReference type="SMART" id="SM00836">
    <property type="entry name" value="DALR_1"/>
    <property type="match status" value="1"/>
</dbReference>
<dbReference type="SUPFAM" id="SSF47323">
    <property type="entry name" value="Anticodon-binding domain of a subclass of class I aminoacyl-tRNA synthetases"/>
    <property type="match status" value="1"/>
</dbReference>
<dbReference type="SUPFAM" id="SSF55190">
    <property type="entry name" value="Arginyl-tRNA synthetase (ArgRS), N-terminal 'additional' domain"/>
    <property type="match status" value="1"/>
</dbReference>
<dbReference type="SUPFAM" id="SSF52374">
    <property type="entry name" value="Nucleotidylyl transferase"/>
    <property type="match status" value="1"/>
</dbReference>
<dbReference type="PROSITE" id="PS00178">
    <property type="entry name" value="AA_TRNA_LIGASE_I"/>
    <property type="match status" value="1"/>
</dbReference>
<keyword id="KW-0007">Acetylation</keyword>
<keyword id="KW-0030">Aminoacyl-tRNA synthetase</keyword>
<keyword id="KW-0067">ATP-binding</keyword>
<keyword id="KW-0963">Cytoplasm</keyword>
<keyword id="KW-0903">Direct protein sequencing</keyword>
<keyword id="KW-0436">Ligase</keyword>
<keyword id="KW-0547">Nucleotide-binding</keyword>
<keyword id="KW-0648">Protein biosynthesis</keyword>
<keyword id="KW-1185">Reference proteome</keyword>
<protein>
    <recommendedName>
        <fullName>Arginine--tRNA ligase, cytoplasmic</fullName>
        <ecNumber evidence="2">6.1.1.19</ecNumber>
    </recommendedName>
    <alternativeName>
        <fullName>Arginyl-tRNA synthetase</fullName>
        <shortName>ArgRS</shortName>
    </alternativeName>
</protein>
<name>SYRC_RAT</name>
<gene>
    <name type="primary">Rars1</name>
    <name type="synonym">Rars</name>
</gene>
<accession>P40329</accession>
<accession>B1WBX8</accession>
<organism>
    <name type="scientific">Rattus norvegicus</name>
    <name type="common">Rat</name>
    <dbReference type="NCBI Taxonomy" id="10116"/>
    <lineage>
        <taxon>Eukaryota</taxon>
        <taxon>Metazoa</taxon>
        <taxon>Chordata</taxon>
        <taxon>Craniata</taxon>
        <taxon>Vertebrata</taxon>
        <taxon>Euteleostomi</taxon>
        <taxon>Mammalia</taxon>
        <taxon>Eutheria</taxon>
        <taxon>Euarchontoglires</taxon>
        <taxon>Glires</taxon>
        <taxon>Rodentia</taxon>
        <taxon>Myomorpha</taxon>
        <taxon>Muroidea</taxon>
        <taxon>Muridae</taxon>
        <taxon>Murinae</taxon>
        <taxon>Rattus</taxon>
    </lineage>
</organism>
<proteinExistence type="evidence at protein level"/>
<comment type="function">
    <text evidence="2">Forms part of a macromolecular complex that catalyzes the attachment of specific amino acids to cognate tRNAs during protein synthesis. Modulates the secretion of AIMP1 and may be involved in generation of the inflammatory cytokine EMAP2 from AIMP1.</text>
</comment>
<comment type="catalytic activity">
    <reaction evidence="2">
        <text>tRNA(Arg) + L-arginine + ATP = L-arginyl-tRNA(Arg) + AMP + diphosphate</text>
        <dbReference type="Rhea" id="RHEA:20301"/>
        <dbReference type="Rhea" id="RHEA-COMP:9658"/>
        <dbReference type="Rhea" id="RHEA-COMP:9673"/>
        <dbReference type="ChEBI" id="CHEBI:30616"/>
        <dbReference type="ChEBI" id="CHEBI:32682"/>
        <dbReference type="ChEBI" id="CHEBI:33019"/>
        <dbReference type="ChEBI" id="CHEBI:78442"/>
        <dbReference type="ChEBI" id="CHEBI:78513"/>
        <dbReference type="ChEBI" id="CHEBI:456215"/>
        <dbReference type="EC" id="6.1.1.19"/>
    </reaction>
</comment>
<comment type="subunit">
    <text evidence="2">Interacts (via N-terminus) with AIMP1 (via N-terminus); this stimulates its catalytic activity. Interacts (via N-terminus) with LARS2 (via C-terminus). Monomer. Part of a multisubunit complex that groups tRNA ligases for Arg (RARS1), Asp (DARS1), Gln (QARS1), Ile (IARS1), Leu (LARS1), Lys (KARS1), Met (MARS1) the bifunctional ligase for Glu and Pro (EPRS1) and the auxiliary subunits AIMP1/p43, AIMP2/p38 and EEF1E1/p18. Interacts with QARS1. Part of a complex composed of RARS1, QARS1 and AIMP1.</text>
</comment>
<comment type="subcellular location">
    <subcellularLocation>
        <location evidence="2">Cytoplasm</location>
    </subcellularLocation>
    <subcellularLocation>
        <location evidence="2">Cytoplasm</location>
        <location evidence="2">Cytosol</location>
    </subcellularLocation>
</comment>
<comment type="tissue specificity">
    <text evidence="4">Detected in dorsal root ganglion.</text>
</comment>
<comment type="domain">
    <text evidence="2">The alpha-helical N-terminus (residues 1-72) mediates interaction with AIMP1 and thereby contributes to the assembly of the multisynthetase complex.</text>
</comment>
<comment type="similarity">
    <text evidence="5">Belongs to the class-I aminoacyl-tRNA synthetase family.</text>
</comment>
<evidence type="ECO:0000250" key="1"/>
<evidence type="ECO:0000250" key="2">
    <source>
        <dbReference type="UniProtKB" id="P54136"/>
    </source>
</evidence>
<evidence type="ECO:0000250" key="3">
    <source>
        <dbReference type="UniProtKB" id="Q05506"/>
    </source>
</evidence>
<evidence type="ECO:0000269" key="4">
    <source>
    </source>
</evidence>
<evidence type="ECO:0000305" key="5"/>